<reference key="1">
    <citation type="submission" date="2005-11" db="EMBL/GenBank/DDBJ databases">
        <title>The complete genome sequence of Lawsonia intracellularis: the causative agent of proliferative enteropathy.</title>
        <authorList>
            <person name="Kaur K."/>
            <person name="Zhang Q."/>
            <person name="Beckler D."/>
            <person name="Munir S."/>
            <person name="Li L."/>
            <person name="Kinsley K."/>
            <person name="Herron L."/>
            <person name="Peterson A."/>
            <person name="May B."/>
            <person name="Singh S."/>
            <person name="Gebhart C."/>
            <person name="Kapur V."/>
        </authorList>
    </citation>
    <scope>NUCLEOTIDE SEQUENCE [LARGE SCALE GENOMIC DNA]</scope>
    <source>
        <strain>PHE/MN1-00</strain>
    </source>
</reference>
<name>KCY_LAWIP</name>
<evidence type="ECO:0000255" key="1">
    <source>
        <dbReference type="HAMAP-Rule" id="MF_00238"/>
    </source>
</evidence>
<accession>Q1MPW3</accession>
<feature type="chain" id="PRO_1000058979" description="Cytidylate kinase">
    <location>
        <begin position="1"/>
        <end position="225"/>
    </location>
</feature>
<feature type="binding site" evidence="1">
    <location>
        <begin position="11"/>
        <end position="19"/>
    </location>
    <ligand>
        <name>ATP</name>
        <dbReference type="ChEBI" id="CHEBI:30616"/>
    </ligand>
</feature>
<keyword id="KW-0067">ATP-binding</keyword>
<keyword id="KW-0963">Cytoplasm</keyword>
<keyword id="KW-0418">Kinase</keyword>
<keyword id="KW-0547">Nucleotide-binding</keyword>
<keyword id="KW-1185">Reference proteome</keyword>
<keyword id="KW-0808">Transferase</keyword>
<proteinExistence type="inferred from homology"/>
<protein>
    <recommendedName>
        <fullName evidence="1">Cytidylate kinase</fullName>
        <shortName evidence="1">CK</shortName>
        <ecNumber evidence="1">2.7.4.25</ecNumber>
    </recommendedName>
    <alternativeName>
        <fullName evidence="1">Cytidine monophosphate kinase</fullName>
        <shortName evidence="1">CMP kinase</shortName>
    </alternativeName>
</protein>
<organism>
    <name type="scientific">Lawsonia intracellularis (strain PHE/MN1-00)</name>
    <dbReference type="NCBI Taxonomy" id="363253"/>
    <lineage>
        <taxon>Bacteria</taxon>
        <taxon>Pseudomonadati</taxon>
        <taxon>Thermodesulfobacteriota</taxon>
        <taxon>Desulfovibrionia</taxon>
        <taxon>Desulfovibrionales</taxon>
        <taxon>Desulfovibrionaceae</taxon>
        <taxon>Lawsonia</taxon>
    </lineage>
</organism>
<gene>
    <name evidence="1" type="primary">cmk</name>
    <name type="ordered locus">LI0910</name>
</gene>
<comment type="catalytic activity">
    <reaction evidence="1">
        <text>CMP + ATP = CDP + ADP</text>
        <dbReference type="Rhea" id="RHEA:11600"/>
        <dbReference type="ChEBI" id="CHEBI:30616"/>
        <dbReference type="ChEBI" id="CHEBI:58069"/>
        <dbReference type="ChEBI" id="CHEBI:60377"/>
        <dbReference type="ChEBI" id="CHEBI:456216"/>
        <dbReference type="EC" id="2.7.4.25"/>
    </reaction>
</comment>
<comment type="catalytic activity">
    <reaction evidence="1">
        <text>dCMP + ATP = dCDP + ADP</text>
        <dbReference type="Rhea" id="RHEA:25094"/>
        <dbReference type="ChEBI" id="CHEBI:30616"/>
        <dbReference type="ChEBI" id="CHEBI:57566"/>
        <dbReference type="ChEBI" id="CHEBI:58593"/>
        <dbReference type="ChEBI" id="CHEBI:456216"/>
        <dbReference type="EC" id="2.7.4.25"/>
    </reaction>
</comment>
<comment type="subcellular location">
    <subcellularLocation>
        <location evidence="1">Cytoplasm</location>
    </subcellularLocation>
</comment>
<comment type="similarity">
    <text evidence="1">Belongs to the cytidylate kinase family. Type 1 subfamily.</text>
</comment>
<dbReference type="EC" id="2.7.4.25" evidence="1"/>
<dbReference type="EMBL" id="AM180252">
    <property type="protein sequence ID" value="CAJ54964.1"/>
    <property type="molecule type" value="Genomic_DNA"/>
</dbReference>
<dbReference type="RefSeq" id="WP_011526993.1">
    <property type="nucleotide sequence ID" value="NC_008011.1"/>
</dbReference>
<dbReference type="SMR" id="Q1MPW3"/>
<dbReference type="STRING" id="363253.LI0910"/>
<dbReference type="KEGG" id="lip:LI0910"/>
<dbReference type="eggNOG" id="COG0283">
    <property type="taxonomic scope" value="Bacteria"/>
</dbReference>
<dbReference type="HOGENOM" id="CLU_079959_0_0_7"/>
<dbReference type="OrthoDB" id="9807434at2"/>
<dbReference type="Proteomes" id="UP000002430">
    <property type="component" value="Chromosome"/>
</dbReference>
<dbReference type="GO" id="GO:0005737">
    <property type="term" value="C:cytoplasm"/>
    <property type="evidence" value="ECO:0007669"/>
    <property type="project" value="UniProtKB-SubCell"/>
</dbReference>
<dbReference type="GO" id="GO:0005524">
    <property type="term" value="F:ATP binding"/>
    <property type="evidence" value="ECO:0007669"/>
    <property type="project" value="UniProtKB-UniRule"/>
</dbReference>
<dbReference type="GO" id="GO:0036430">
    <property type="term" value="F:CMP kinase activity"/>
    <property type="evidence" value="ECO:0007669"/>
    <property type="project" value="RHEA"/>
</dbReference>
<dbReference type="GO" id="GO:0036431">
    <property type="term" value="F:dCMP kinase activity"/>
    <property type="evidence" value="ECO:0007669"/>
    <property type="project" value="RHEA"/>
</dbReference>
<dbReference type="GO" id="GO:0006220">
    <property type="term" value="P:pyrimidine nucleotide metabolic process"/>
    <property type="evidence" value="ECO:0007669"/>
    <property type="project" value="UniProtKB-UniRule"/>
</dbReference>
<dbReference type="CDD" id="cd02020">
    <property type="entry name" value="CMPK"/>
    <property type="match status" value="1"/>
</dbReference>
<dbReference type="Gene3D" id="3.40.50.300">
    <property type="entry name" value="P-loop containing nucleotide triphosphate hydrolases"/>
    <property type="match status" value="1"/>
</dbReference>
<dbReference type="HAMAP" id="MF_00238">
    <property type="entry name" value="Cytidyl_kinase_type1"/>
    <property type="match status" value="1"/>
</dbReference>
<dbReference type="InterPro" id="IPR003136">
    <property type="entry name" value="Cytidylate_kin"/>
</dbReference>
<dbReference type="InterPro" id="IPR011994">
    <property type="entry name" value="Cytidylate_kinase_dom"/>
</dbReference>
<dbReference type="InterPro" id="IPR027417">
    <property type="entry name" value="P-loop_NTPase"/>
</dbReference>
<dbReference type="NCBIfam" id="TIGR00017">
    <property type="entry name" value="cmk"/>
    <property type="match status" value="1"/>
</dbReference>
<dbReference type="Pfam" id="PF02224">
    <property type="entry name" value="Cytidylate_kin"/>
    <property type="match status" value="1"/>
</dbReference>
<dbReference type="SUPFAM" id="SSF52540">
    <property type="entry name" value="P-loop containing nucleoside triphosphate hydrolases"/>
    <property type="match status" value="1"/>
</dbReference>
<sequence>MEQHTIITIDGPAGVGKSTLAKKLGTILNLPYLDTGAMFRKLALQLGNKAETLPDSILQEQCKKVTFQLQGVGKNSLLMCNGESIGHEIRSETAGILAAQLGERTIIREYLKNIEQQIGNTMSIIAEGRDLGTEVFPKAQFKFFIDANPIIRAQRRFNQLKKEGIFQDYNDILHSINYRDKLDKNRTIAPLEPAKDAILIDSSIMDIDSILKIMLNYITIPHLSQ</sequence>